<keyword id="KW-0227">DNA damage</keyword>
<keyword id="KW-0234">DNA repair</keyword>
<keyword id="KW-0378">Hydrolase</keyword>
<organism>
    <name type="scientific">Chlamydia abortus (strain DSM 27085 / S26/3)</name>
    <name type="common">Chlamydophila abortus</name>
    <dbReference type="NCBI Taxonomy" id="218497"/>
    <lineage>
        <taxon>Bacteria</taxon>
        <taxon>Pseudomonadati</taxon>
        <taxon>Chlamydiota</taxon>
        <taxon>Chlamydiia</taxon>
        <taxon>Chlamydiales</taxon>
        <taxon>Chlamydiaceae</taxon>
        <taxon>Chlamydia/Chlamydophila group</taxon>
        <taxon>Chlamydia</taxon>
    </lineage>
</organism>
<reference key="1">
    <citation type="journal article" date="2005" name="Genome Res.">
        <title>The Chlamydophila abortus genome sequence reveals an array of variable proteins that contribute to interspecies variation.</title>
        <authorList>
            <person name="Thomson N.R."/>
            <person name="Yeats C."/>
            <person name="Bell K."/>
            <person name="Holden M.T.G."/>
            <person name="Bentley S.D."/>
            <person name="Livingstone M."/>
            <person name="Cerdeno-Tarraga A.-M."/>
            <person name="Harris B."/>
            <person name="Doggett J."/>
            <person name="Ormond D."/>
            <person name="Mungall K."/>
            <person name="Clarke K."/>
            <person name="Feltwell T."/>
            <person name="Hance Z."/>
            <person name="Sanders M."/>
            <person name="Quail M.A."/>
            <person name="Price C."/>
            <person name="Barrell B.G."/>
            <person name="Parkhill J."/>
            <person name="Longbottom D."/>
        </authorList>
    </citation>
    <scope>NUCLEOTIDE SEQUENCE [LARGE SCALE GENOMIC DNA]</scope>
    <source>
        <strain>DSM 27085 / S26/3</strain>
    </source>
</reference>
<proteinExistence type="inferred from homology"/>
<evidence type="ECO:0000255" key="1">
    <source>
        <dbReference type="HAMAP-Rule" id="MF_00527"/>
    </source>
</evidence>
<accession>Q5L6N0</accession>
<dbReference type="EC" id="3.2.2.-" evidence="1"/>
<dbReference type="EMBL" id="CR848038">
    <property type="protein sequence ID" value="CAH63691.1"/>
    <property type="molecule type" value="Genomic_DNA"/>
</dbReference>
<dbReference type="RefSeq" id="WP_006343897.1">
    <property type="nucleotide sequence ID" value="NC_004552.2"/>
</dbReference>
<dbReference type="SMR" id="Q5L6N0"/>
<dbReference type="KEGG" id="cab:CAB235"/>
<dbReference type="eggNOG" id="COG2094">
    <property type="taxonomic scope" value="Bacteria"/>
</dbReference>
<dbReference type="HOGENOM" id="CLU_060471_2_0_0"/>
<dbReference type="OrthoDB" id="9794313at2"/>
<dbReference type="Proteomes" id="UP000001012">
    <property type="component" value="Chromosome"/>
</dbReference>
<dbReference type="GO" id="GO:0003905">
    <property type="term" value="F:alkylbase DNA N-glycosylase activity"/>
    <property type="evidence" value="ECO:0007669"/>
    <property type="project" value="InterPro"/>
</dbReference>
<dbReference type="GO" id="GO:0003677">
    <property type="term" value="F:DNA binding"/>
    <property type="evidence" value="ECO:0007669"/>
    <property type="project" value="InterPro"/>
</dbReference>
<dbReference type="GO" id="GO:0006284">
    <property type="term" value="P:base-excision repair"/>
    <property type="evidence" value="ECO:0007669"/>
    <property type="project" value="InterPro"/>
</dbReference>
<dbReference type="CDD" id="cd00540">
    <property type="entry name" value="AAG"/>
    <property type="match status" value="1"/>
</dbReference>
<dbReference type="FunFam" id="3.10.300.10:FF:000001">
    <property type="entry name" value="Putative 3-methyladenine DNA glycosylase"/>
    <property type="match status" value="1"/>
</dbReference>
<dbReference type="Gene3D" id="3.10.300.10">
    <property type="entry name" value="Methylpurine-DNA glycosylase (MPG)"/>
    <property type="match status" value="1"/>
</dbReference>
<dbReference type="HAMAP" id="MF_00527">
    <property type="entry name" value="3MGH"/>
    <property type="match status" value="1"/>
</dbReference>
<dbReference type="InterPro" id="IPR011034">
    <property type="entry name" value="Formyl_transferase-like_C_sf"/>
</dbReference>
<dbReference type="InterPro" id="IPR003180">
    <property type="entry name" value="MPG"/>
</dbReference>
<dbReference type="InterPro" id="IPR036995">
    <property type="entry name" value="MPG_sf"/>
</dbReference>
<dbReference type="NCBIfam" id="TIGR00567">
    <property type="entry name" value="3mg"/>
    <property type="match status" value="1"/>
</dbReference>
<dbReference type="PANTHER" id="PTHR10429">
    <property type="entry name" value="DNA-3-METHYLADENINE GLYCOSYLASE"/>
    <property type="match status" value="1"/>
</dbReference>
<dbReference type="PANTHER" id="PTHR10429:SF0">
    <property type="entry name" value="DNA-3-METHYLADENINE GLYCOSYLASE"/>
    <property type="match status" value="1"/>
</dbReference>
<dbReference type="Pfam" id="PF02245">
    <property type="entry name" value="Pur_DNA_glyco"/>
    <property type="match status" value="1"/>
</dbReference>
<dbReference type="SUPFAM" id="SSF50486">
    <property type="entry name" value="FMT C-terminal domain-like"/>
    <property type="match status" value="1"/>
</dbReference>
<gene>
    <name type="ordered locus">CAB235</name>
</gene>
<sequence length="190" mass="21978">MLPESFFLNDDVLYLAKELLGHVLVTHLEGQRTSGIIIETEAYRGPEDKACHAYNYRKTQRNLPMYSRGGIAYIYRCYGMHSLFNVVTGHQDLPHAVLIRAILPYEGEDIMVLRRQWQNKPKHLLTNGPGKVCQALNLTLEYNTHSLSSPQIHISKKKFSGTITQKPRIGIDYAQEYRDLPWRFLLHIKN</sequence>
<protein>
    <recommendedName>
        <fullName evidence="1">Putative 3-methyladenine DNA glycosylase</fullName>
        <ecNumber evidence="1">3.2.2.-</ecNumber>
    </recommendedName>
</protein>
<feature type="chain" id="PRO_0000265006" description="Putative 3-methyladenine DNA glycosylase">
    <location>
        <begin position="1"/>
        <end position="190"/>
    </location>
</feature>
<name>3MGH_CHLAB</name>
<comment type="similarity">
    <text evidence="1">Belongs to the DNA glycosylase MPG family.</text>
</comment>